<name>NU146_SCHPO</name>
<feature type="chain" id="PRO_0000116418" description="Nucleoporin nup146">
    <location>
        <begin position="1"/>
        <end position="1325"/>
    </location>
</feature>
<feature type="region of interest" description="Disordered" evidence="1">
    <location>
        <begin position="1"/>
        <end position="20"/>
    </location>
</feature>
<feature type="region of interest" description="Disordered" evidence="1">
    <location>
        <begin position="453"/>
        <end position="474"/>
    </location>
</feature>
<feature type="region of interest" description="Disordered" evidence="1">
    <location>
        <begin position="758"/>
        <end position="951"/>
    </location>
</feature>
<feature type="region of interest" description="Disordered" evidence="1">
    <location>
        <begin position="973"/>
        <end position="994"/>
    </location>
</feature>
<feature type="compositionally biased region" description="Polar residues" evidence="1">
    <location>
        <begin position="763"/>
        <end position="778"/>
    </location>
</feature>
<feature type="compositionally biased region" description="Basic and acidic residues" evidence="1">
    <location>
        <begin position="779"/>
        <end position="791"/>
    </location>
</feature>
<feature type="compositionally biased region" description="Polar residues" evidence="1">
    <location>
        <begin position="792"/>
        <end position="801"/>
    </location>
</feature>
<feature type="compositionally biased region" description="Basic and acidic residues" evidence="1">
    <location>
        <begin position="802"/>
        <end position="811"/>
    </location>
</feature>
<feature type="compositionally biased region" description="Polar residues" evidence="1">
    <location>
        <begin position="816"/>
        <end position="835"/>
    </location>
</feature>
<feature type="compositionally biased region" description="Polar residues" evidence="1">
    <location>
        <begin position="850"/>
        <end position="861"/>
    </location>
</feature>
<feature type="compositionally biased region" description="Basic and acidic residues" evidence="1">
    <location>
        <begin position="867"/>
        <end position="881"/>
    </location>
</feature>
<feature type="compositionally biased region" description="Acidic residues" evidence="1">
    <location>
        <begin position="927"/>
        <end position="937"/>
    </location>
</feature>
<feature type="modified residue" description="Phosphothreonine" evidence="3">
    <location>
        <position position="899"/>
    </location>
</feature>
<feature type="modified residue" description="Phosphothreonine" evidence="3">
    <location>
        <position position="946"/>
    </location>
</feature>
<feature type="modified residue" description="Phosphoserine" evidence="3">
    <location>
        <position position="1041"/>
    </location>
</feature>
<feature type="modified residue" description="Phosphoserine" evidence="3">
    <location>
        <position position="1043"/>
    </location>
</feature>
<feature type="modified residue" description="Phosphoserine" evidence="3">
    <location>
        <position position="1044"/>
    </location>
</feature>
<accession>Q09847</accession>
<dbReference type="EMBL" id="CU329670">
    <property type="protein sequence ID" value="CAA91241.1"/>
    <property type="molecule type" value="Genomic_DNA"/>
</dbReference>
<dbReference type="PIR" id="S62497">
    <property type="entry name" value="S62497"/>
</dbReference>
<dbReference type="RefSeq" id="NP_594543.1">
    <property type="nucleotide sequence ID" value="NM_001019972.2"/>
</dbReference>
<dbReference type="SMR" id="Q09847"/>
<dbReference type="BioGRID" id="278009">
    <property type="interactions" value="2"/>
</dbReference>
<dbReference type="FunCoup" id="Q09847">
    <property type="interactions" value="31"/>
</dbReference>
<dbReference type="IntAct" id="Q09847">
    <property type="interactions" value="1"/>
</dbReference>
<dbReference type="STRING" id="284812.Q09847"/>
<dbReference type="iPTMnet" id="Q09847"/>
<dbReference type="PaxDb" id="4896-SPAC23D3.06c.1"/>
<dbReference type="EnsemblFungi" id="SPAC23D3.06c.1">
    <property type="protein sequence ID" value="SPAC23D3.06c.1:pep"/>
    <property type="gene ID" value="SPAC23D3.06c"/>
</dbReference>
<dbReference type="GeneID" id="2541507"/>
<dbReference type="KEGG" id="spo:2541507"/>
<dbReference type="PomBase" id="SPAC23D3.06c">
    <property type="gene designation" value="nup146"/>
</dbReference>
<dbReference type="VEuPathDB" id="FungiDB:SPAC23D3.06c"/>
<dbReference type="eggNOG" id="KOG3630">
    <property type="taxonomic scope" value="Eukaryota"/>
</dbReference>
<dbReference type="HOGENOM" id="CLU_257817_0_0_1"/>
<dbReference type="InParanoid" id="Q09847"/>
<dbReference type="OMA" id="RGQCASI"/>
<dbReference type="PhylomeDB" id="Q09847"/>
<dbReference type="Reactome" id="R-SPO-159227">
    <property type="pathway name" value="Transport of the SLBP independent Mature mRNA"/>
</dbReference>
<dbReference type="Reactome" id="R-SPO-159231">
    <property type="pathway name" value="Transport of Mature mRNA Derived from an Intronless Transcript"/>
</dbReference>
<dbReference type="Reactome" id="R-SPO-159236">
    <property type="pathway name" value="Transport of Mature mRNA derived from an Intron-Containing Transcript"/>
</dbReference>
<dbReference type="Reactome" id="R-SPO-3371453">
    <property type="pathway name" value="Regulation of HSF1-mediated heat shock response"/>
</dbReference>
<dbReference type="Reactome" id="R-SPO-4085377">
    <property type="pathway name" value="SUMOylation of SUMOylation proteins"/>
</dbReference>
<dbReference type="Reactome" id="R-SPO-4551638">
    <property type="pathway name" value="SUMOylation of chromatin organization proteins"/>
</dbReference>
<dbReference type="Reactome" id="R-SPO-4570464">
    <property type="pathway name" value="SUMOylation of RNA binding proteins"/>
</dbReference>
<dbReference type="Reactome" id="R-SPO-5578749">
    <property type="pathway name" value="Transcriptional regulation by small RNAs"/>
</dbReference>
<dbReference type="Reactome" id="R-SPO-9615933">
    <property type="pathway name" value="Postmitotic nuclear pore complex (NPC) reformation"/>
</dbReference>
<dbReference type="PRO" id="PR:Q09847"/>
<dbReference type="Proteomes" id="UP000002485">
    <property type="component" value="Chromosome I"/>
</dbReference>
<dbReference type="GO" id="GO:0005737">
    <property type="term" value="C:cytoplasm"/>
    <property type="evidence" value="ECO:0007669"/>
    <property type="project" value="UniProtKB-SubCell"/>
</dbReference>
<dbReference type="GO" id="GO:0005635">
    <property type="term" value="C:nuclear envelope"/>
    <property type="evidence" value="ECO:0007005"/>
    <property type="project" value="PomBase"/>
</dbReference>
<dbReference type="GO" id="GO:0034399">
    <property type="term" value="C:nuclear periphery"/>
    <property type="evidence" value="ECO:0000314"/>
    <property type="project" value="PomBase"/>
</dbReference>
<dbReference type="GO" id="GO:0005643">
    <property type="term" value="C:nuclear pore"/>
    <property type="evidence" value="ECO:0000314"/>
    <property type="project" value="PomBase"/>
</dbReference>
<dbReference type="GO" id="GO:0044613">
    <property type="term" value="C:nuclear pore central transport channel"/>
    <property type="evidence" value="ECO:0000266"/>
    <property type="project" value="PomBase"/>
</dbReference>
<dbReference type="GO" id="GO:0044614">
    <property type="term" value="C:nuclear pore cytoplasmic filaments"/>
    <property type="evidence" value="ECO:0000266"/>
    <property type="project" value="PomBase"/>
</dbReference>
<dbReference type="GO" id="GO:0005634">
    <property type="term" value="C:nucleus"/>
    <property type="evidence" value="ECO:0007005"/>
    <property type="project" value="PomBase"/>
</dbReference>
<dbReference type="GO" id="GO:0008139">
    <property type="term" value="F:nuclear localization sequence binding"/>
    <property type="evidence" value="ECO:0000318"/>
    <property type="project" value="GO_Central"/>
</dbReference>
<dbReference type="GO" id="GO:0017056">
    <property type="term" value="F:structural constituent of nuclear pore"/>
    <property type="evidence" value="ECO:0000318"/>
    <property type="project" value="GO_Central"/>
</dbReference>
<dbReference type="GO" id="GO:0006606">
    <property type="term" value="P:protein import into nucleus"/>
    <property type="evidence" value="ECO:0000318"/>
    <property type="project" value="GO_Central"/>
</dbReference>
<dbReference type="GO" id="GO:0000054">
    <property type="term" value="P:ribosomal subunit export from nucleus"/>
    <property type="evidence" value="ECO:0000266"/>
    <property type="project" value="PomBase"/>
</dbReference>
<dbReference type="GO" id="GO:0006405">
    <property type="term" value="P:RNA export from nucleus"/>
    <property type="evidence" value="ECO:0000318"/>
    <property type="project" value="GO_Central"/>
</dbReference>
<dbReference type="Gene3D" id="2.130.10.10">
    <property type="entry name" value="YVTN repeat-like/Quinoprotein amine dehydrogenase"/>
    <property type="match status" value="1"/>
</dbReference>
<dbReference type="InterPro" id="IPR026054">
    <property type="entry name" value="Nucleoporin"/>
</dbReference>
<dbReference type="InterPro" id="IPR039462">
    <property type="entry name" value="Nup159/Nup146_N"/>
</dbReference>
<dbReference type="InterPro" id="IPR015943">
    <property type="entry name" value="WD40/YVTN_repeat-like_dom_sf"/>
</dbReference>
<dbReference type="PANTHER" id="PTHR23193">
    <property type="entry name" value="NUCLEAR PORE COMPLEX PROTEIN NUP"/>
    <property type="match status" value="1"/>
</dbReference>
<dbReference type="PANTHER" id="PTHR23193:SF23">
    <property type="entry name" value="NUCLEAR PORE COMPLEX PROTEIN NUP153"/>
    <property type="match status" value="1"/>
</dbReference>
<dbReference type="Pfam" id="PF16755">
    <property type="entry name" value="Beta-prop_NUP159_NUP214"/>
    <property type="match status" value="1"/>
</dbReference>
<dbReference type="SUPFAM" id="SSF117289">
    <property type="entry name" value="Nucleoporin domain"/>
    <property type="match status" value="1"/>
</dbReference>
<organism>
    <name type="scientific">Schizosaccharomyces pombe (strain 972 / ATCC 24843)</name>
    <name type="common">Fission yeast</name>
    <dbReference type="NCBI Taxonomy" id="284812"/>
    <lineage>
        <taxon>Eukaryota</taxon>
        <taxon>Fungi</taxon>
        <taxon>Dikarya</taxon>
        <taxon>Ascomycota</taxon>
        <taxon>Taphrinomycotina</taxon>
        <taxon>Schizosaccharomycetes</taxon>
        <taxon>Schizosaccharomycetales</taxon>
        <taxon>Schizosaccharomycetaceae</taxon>
        <taxon>Schizosaccharomyces</taxon>
    </lineage>
</organism>
<keyword id="KW-0963">Cytoplasm</keyword>
<keyword id="KW-0539">Nucleus</keyword>
<keyword id="KW-0597">Phosphoprotein</keyword>
<keyword id="KW-1185">Reference proteome</keyword>
<keyword id="KW-0813">Transport</keyword>
<gene>
    <name type="primary">nup146</name>
    <name type="ORF">SPAC23D3.06c</name>
</gene>
<protein>
    <recommendedName>
        <fullName>Nucleoporin nup146</fullName>
    </recommendedName>
    <alternativeName>
        <fullName>Nuclear pore protein nup146</fullName>
    </alternativeName>
</protein>
<sequence>MNAENTFSILNTNEPNAGGSQVTESEIEEEDIEFLSFAALKIGATSSLSNSSLGLPEYSNLFAINNLKSLFVAGVPNYLIIGSTLDLQKSLIDADENVDANVLKDSASIRHVSLPDAKFSMVSFSSNGEFVIAYDFVSFELSVYETDALLKNSATSIYKAVFPDLVQVLPNPEINNLVILRNLKLEVFLLSLSKFQVESPLAKDATCAAWSRRGKQCVIGFNNGTMSQYTPAGEIKLRIPRPPSLENYFVECISWIENREFVVFYSPLTSLSNESDEPPHESECFVISVGMNGHFNFGKAGDPTPPFGAVNRRDHHYIASLHAWKPDLRSLVVVANTASADLGVLALSMEKNQWSILNIVDETKRASLPYSNKKDSDSSPTALVMDFTATDRISKPLDPTEAPADCSPLPIVWVFNDEFQLVAYRIFYADAISKSIDYPEMNVIKDKNKDSTVRASNNENIPTPDKQASPFVKNLSSTSSPFSQSSAFGNFKFGQATSFDKGLSTDASSGAKSNTPVFGQPSTFGQAPVFGQPSAFGQAPVFGQPSAFGQSSFSFGTSNMNQKLDFGTFKSPLSGAATGEAKTNLEKAVTSASGKASFTGFAPSQSTTSGLNFDSIPKDNEAASIFGSSQVSTKNTSGFQFSNNTLLADNVDEDIESDHDTKIEELANSDVEPSTEQNIGGDVSWGASTFQSKPQPSFSFGLTLDDKSNTPGKNFSIFGKTAETQVEQKKPENNVLTKPFSFAPSDKSMFAANIPSAGEGLDQQKTSKALPSTGITKLSENDNEKAEESNETKGFNTTIAKQNDKSSKSEGKASVANMSALNKSTNNETSDSKPSLKSPLFNFSADAPTFTFNKPSETPPFSFNKPLVEKESKQDVSDTSDRSPFSFKAFGIDSKKSPTPEPTEMAESNISEESEGWKLIEQPNVESEIEDQDEESSDLNGKRRSTPPKIHEVGVNKMLDVVPKEKRDLNSFFPKQPLVVQSTDKNKKEPQESLEDEILSAEGFSEVEAANKISRFEPFSSPKLKLATSDNAPEKYVFEESESSDLEEGPVPLRNLESLADLPEAESNEKLPMVNTFERLYLQFKNELDLVWQNINIIAEYIEGQTSTPSAVSEQATMAMLSQNTEELEDLLDTVTSFSAFCSDYSKQIDYLEACLVRINAKRIQVTRLLKALTNPAFEKQMELRQLGPEALRRQKELRLKMEKVLKSLSTLEQQAVDARMSDTRRFKKPTLGSIEVAYSRIATLLGQRLKQLYKLEKDIKRMATKKKMITKKSMSSDMMTQFRALGISQSSTKQVSAHYLREFERQDAFRNGVFKRLTSLKKAD</sequence>
<comment type="function">
    <text evidence="2">Functions as a component of the nuclear pore complex (NPC). NPC components, collectively referred to as nucleoporins (NUPs), can play the role of both NPC structural components and of docking or interaction partners for transiently associated nuclear transport factors. Active directional transport is assured by both, a Phe-Gly (FG) repeat affinity gradient for these transport factors across the NPC and a transport cofactor concentration gradient across the nuclear envelope.</text>
</comment>
<comment type="subcellular location">
    <subcellularLocation>
        <location>Cytoplasm</location>
    </subcellularLocation>
    <subcellularLocation>
        <location>Nucleus</location>
    </subcellularLocation>
    <text>Nuclear rim.</text>
</comment>
<proteinExistence type="evidence at protein level"/>
<reference key="1">
    <citation type="journal article" date="2002" name="Nature">
        <title>The genome sequence of Schizosaccharomyces pombe.</title>
        <authorList>
            <person name="Wood V."/>
            <person name="Gwilliam R."/>
            <person name="Rajandream M.A."/>
            <person name="Lyne M.H."/>
            <person name="Lyne R."/>
            <person name="Stewart A."/>
            <person name="Sgouros J.G."/>
            <person name="Peat N."/>
            <person name="Hayles J."/>
            <person name="Baker S.G."/>
            <person name="Basham D."/>
            <person name="Bowman S."/>
            <person name="Brooks K."/>
            <person name="Brown D."/>
            <person name="Brown S."/>
            <person name="Chillingworth T."/>
            <person name="Churcher C.M."/>
            <person name="Collins M."/>
            <person name="Connor R."/>
            <person name="Cronin A."/>
            <person name="Davis P."/>
            <person name="Feltwell T."/>
            <person name="Fraser A."/>
            <person name="Gentles S."/>
            <person name="Goble A."/>
            <person name="Hamlin N."/>
            <person name="Harris D.E."/>
            <person name="Hidalgo J."/>
            <person name="Hodgson G."/>
            <person name="Holroyd S."/>
            <person name="Hornsby T."/>
            <person name="Howarth S."/>
            <person name="Huckle E.J."/>
            <person name="Hunt S."/>
            <person name="Jagels K."/>
            <person name="James K.D."/>
            <person name="Jones L."/>
            <person name="Jones M."/>
            <person name="Leather S."/>
            <person name="McDonald S."/>
            <person name="McLean J."/>
            <person name="Mooney P."/>
            <person name="Moule S."/>
            <person name="Mungall K.L."/>
            <person name="Murphy L.D."/>
            <person name="Niblett D."/>
            <person name="Odell C."/>
            <person name="Oliver K."/>
            <person name="O'Neil S."/>
            <person name="Pearson D."/>
            <person name="Quail M.A."/>
            <person name="Rabbinowitsch E."/>
            <person name="Rutherford K.M."/>
            <person name="Rutter S."/>
            <person name="Saunders D."/>
            <person name="Seeger K."/>
            <person name="Sharp S."/>
            <person name="Skelton J."/>
            <person name="Simmonds M.N."/>
            <person name="Squares R."/>
            <person name="Squares S."/>
            <person name="Stevens K."/>
            <person name="Taylor K."/>
            <person name="Taylor R.G."/>
            <person name="Tivey A."/>
            <person name="Walsh S.V."/>
            <person name="Warren T."/>
            <person name="Whitehead S."/>
            <person name="Woodward J.R."/>
            <person name="Volckaert G."/>
            <person name="Aert R."/>
            <person name="Robben J."/>
            <person name="Grymonprez B."/>
            <person name="Weltjens I."/>
            <person name="Vanstreels E."/>
            <person name="Rieger M."/>
            <person name="Schaefer M."/>
            <person name="Mueller-Auer S."/>
            <person name="Gabel C."/>
            <person name="Fuchs M."/>
            <person name="Duesterhoeft A."/>
            <person name="Fritzc C."/>
            <person name="Holzer E."/>
            <person name="Moestl D."/>
            <person name="Hilbert H."/>
            <person name="Borzym K."/>
            <person name="Langer I."/>
            <person name="Beck A."/>
            <person name="Lehrach H."/>
            <person name="Reinhardt R."/>
            <person name="Pohl T.M."/>
            <person name="Eger P."/>
            <person name="Zimmermann W."/>
            <person name="Wedler H."/>
            <person name="Wambutt R."/>
            <person name="Purnelle B."/>
            <person name="Goffeau A."/>
            <person name="Cadieu E."/>
            <person name="Dreano S."/>
            <person name="Gloux S."/>
            <person name="Lelaure V."/>
            <person name="Mottier S."/>
            <person name="Galibert F."/>
            <person name="Aves S.J."/>
            <person name="Xiang Z."/>
            <person name="Hunt C."/>
            <person name="Moore K."/>
            <person name="Hurst S.M."/>
            <person name="Lucas M."/>
            <person name="Rochet M."/>
            <person name="Gaillardin C."/>
            <person name="Tallada V.A."/>
            <person name="Garzon A."/>
            <person name="Thode G."/>
            <person name="Daga R.R."/>
            <person name="Cruzado L."/>
            <person name="Jimenez J."/>
            <person name="Sanchez M."/>
            <person name="del Rey F."/>
            <person name="Benito J."/>
            <person name="Dominguez A."/>
            <person name="Revuelta J.L."/>
            <person name="Moreno S."/>
            <person name="Armstrong J."/>
            <person name="Forsburg S.L."/>
            <person name="Cerutti L."/>
            <person name="Lowe T."/>
            <person name="McCombie W.R."/>
            <person name="Paulsen I."/>
            <person name="Potashkin J."/>
            <person name="Shpakovski G.V."/>
            <person name="Ussery D."/>
            <person name="Barrell B.G."/>
            <person name="Nurse P."/>
        </authorList>
    </citation>
    <scope>NUCLEOTIDE SEQUENCE [LARGE SCALE GENOMIC DNA]</scope>
    <source>
        <strain>972 / ATCC 24843</strain>
    </source>
</reference>
<reference key="2">
    <citation type="journal article" date="2004" name="Yeast">
        <title>Identification of genes encoding putative nucleoporins and transport factors in the fission yeast Schizosaccharomyces pombe: a deletion analysis.</title>
        <authorList>
            <person name="Chen X.Q."/>
            <person name="Du X."/>
            <person name="Liu J."/>
            <person name="Balasubramanian M.K."/>
            <person name="Balasundaram D."/>
        </authorList>
    </citation>
    <scope>FUNCTION</scope>
    <scope>SUBCELLULAR LOCATION</scope>
</reference>
<reference key="3">
    <citation type="journal article" date="2006" name="Nat. Biotechnol.">
        <title>ORFeome cloning and global analysis of protein localization in the fission yeast Schizosaccharomyces pombe.</title>
        <authorList>
            <person name="Matsuyama A."/>
            <person name="Arai R."/>
            <person name="Yashiroda Y."/>
            <person name="Shirai A."/>
            <person name="Kamata A."/>
            <person name="Sekido S."/>
            <person name="Kobayashi Y."/>
            <person name="Hashimoto A."/>
            <person name="Hamamoto M."/>
            <person name="Hiraoka Y."/>
            <person name="Horinouchi S."/>
            <person name="Yoshida M."/>
        </authorList>
    </citation>
    <scope>SUBCELLULAR LOCATION [LARGE SCALE ANALYSIS]</scope>
</reference>
<reference key="4">
    <citation type="journal article" date="2008" name="J. Proteome Res.">
        <title>Phosphoproteome analysis of fission yeast.</title>
        <authorList>
            <person name="Wilson-Grady J.T."/>
            <person name="Villen J."/>
            <person name="Gygi S.P."/>
        </authorList>
    </citation>
    <scope>PHOSPHORYLATION [LARGE SCALE ANALYSIS] AT THR-899; THR-946; SER-1041; SER-1043 AND SER-1044</scope>
    <scope>IDENTIFICATION BY MASS SPECTROMETRY</scope>
</reference>
<evidence type="ECO:0000256" key="1">
    <source>
        <dbReference type="SAM" id="MobiDB-lite"/>
    </source>
</evidence>
<evidence type="ECO:0000269" key="2">
    <source>
    </source>
</evidence>
<evidence type="ECO:0000269" key="3">
    <source>
    </source>
</evidence>